<keyword id="KW-0002">3D-structure</keyword>
<keyword id="KW-0025">Alternative splicing</keyword>
<keyword id="KW-0963">Cytoplasm</keyword>
<keyword id="KW-0967">Endosome</keyword>
<keyword id="KW-0472">Membrane</keyword>
<keyword id="KW-0597">Phosphoprotein</keyword>
<keyword id="KW-0653">Protein transport</keyword>
<keyword id="KW-1185">Reference proteome</keyword>
<keyword id="KW-0813">Transport</keyword>
<accession>Q8C0E2</accession>
<accession>Q3TN45</accession>
<accession>Q8K2V3</accession>
<reference key="1">
    <citation type="journal article" date="2005" name="Science">
        <title>The transcriptional landscape of the mammalian genome.</title>
        <authorList>
            <person name="Carninci P."/>
            <person name="Kasukawa T."/>
            <person name="Katayama S."/>
            <person name="Gough J."/>
            <person name="Frith M.C."/>
            <person name="Maeda N."/>
            <person name="Oyama R."/>
            <person name="Ravasi T."/>
            <person name="Lenhard B."/>
            <person name="Wells C."/>
            <person name="Kodzius R."/>
            <person name="Shimokawa K."/>
            <person name="Bajic V.B."/>
            <person name="Brenner S.E."/>
            <person name="Batalov S."/>
            <person name="Forrest A.R."/>
            <person name="Zavolan M."/>
            <person name="Davis M.J."/>
            <person name="Wilming L.G."/>
            <person name="Aidinis V."/>
            <person name="Allen J.E."/>
            <person name="Ambesi-Impiombato A."/>
            <person name="Apweiler R."/>
            <person name="Aturaliya R.N."/>
            <person name="Bailey T.L."/>
            <person name="Bansal M."/>
            <person name="Baxter L."/>
            <person name="Beisel K.W."/>
            <person name="Bersano T."/>
            <person name="Bono H."/>
            <person name="Chalk A.M."/>
            <person name="Chiu K.P."/>
            <person name="Choudhary V."/>
            <person name="Christoffels A."/>
            <person name="Clutterbuck D.R."/>
            <person name="Crowe M.L."/>
            <person name="Dalla E."/>
            <person name="Dalrymple B.P."/>
            <person name="de Bono B."/>
            <person name="Della Gatta G."/>
            <person name="di Bernardo D."/>
            <person name="Down T."/>
            <person name="Engstrom P."/>
            <person name="Fagiolini M."/>
            <person name="Faulkner G."/>
            <person name="Fletcher C.F."/>
            <person name="Fukushima T."/>
            <person name="Furuno M."/>
            <person name="Futaki S."/>
            <person name="Gariboldi M."/>
            <person name="Georgii-Hemming P."/>
            <person name="Gingeras T.R."/>
            <person name="Gojobori T."/>
            <person name="Green R.E."/>
            <person name="Gustincich S."/>
            <person name="Harbers M."/>
            <person name="Hayashi Y."/>
            <person name="Hensch T.K."/>
            <person name="Hirokawa N."/>
            <person name="Hill D."/>
            <person name="Huminiecki L."/>
            <person name="Iacono M."/>
            <person name="Ikeo K."/>
            <person name="Iwama A."/>
            <person name="Ishikawa T."/>
            <person name="Jakt M."/>
            <person name="Kanapin A."/>
            <person name="Katoh M."/>
            <person name="Kawasawa Y."/>
            <person name="Kelso J."/>
            <person name="Kitamura H."/>
            <person name="Kitano H."/>
            <person name="Kollias G."/>
            <person name="Krishnan S.P."/>
            <person name="Kruger A."/>
            <person name="Kummerfeld S.K."/>
            <person name="Kurochkin I.V."/>
            <person name="Lareau L.F."/>
            <person name="Lazarevic D."/>
            <person name="Lipovich L."/>
            <person name="Liu J."/>
            <person name="Liuni S."/>
            <person name="McWilliam S."/>
            <person name="Madan Babu M."/>
            <person name="Madera M."/>
            <person name="Marchionni L."/>
            <person name="Matsuda H."/>
            <person name="Matsuzawa S."/>
            <person name="Miki H."/>
            <person name="Mignone F."/>
            <person name="Miyake S."/>
            <person name="Morris K."/>
            <person name="Mottagui-Tabar S."/>
            <person name="Mulder N."/>
            <person name="Nakano N."/>
            <person name="Nakauchi H."/>
            <person name="Ng P."/>
            <person name="Nilsson R."/>
            <person name="Nishiguchi S."/>
            <person name="Nishikawa S."/>
            <person name="Nori F."/>
            <person name="Ohara O."/>
            <person name="Okazaki Y."/>
            <person name="Orlando V."/>
            <person name="Pang K.C."/>
            <person name="Pavan W.J."/>
            <person name="Pavesi G."/>
            <person name="Pesole G."/>
            <person name="Petrovsky N."/>
            <person name="Piazza S."/>
            <person name="Reed J."/>
            <person name="Reid J.F."/>
            <person name="Ring B.Z."/>
            <person name="Ringwald M."/>
            <person name="Rost B."/>
            <person name="Ruan Y."/>
            <person name="Salzberg S.L."/>
            <person name="Sandelin A."/>
            <person name="Schneider C."/>
            <person name="Schoenbach C."/>
            <person name="Sekiguchi K."/>
            <person name="Semple C.A."/>
            <person name="Seno S."/>
            <person name="Sessa L."/>
            <person name="Sheng Y."/>
            <person name="Shibata Y."/>
            <person name="Shimada H."/>
            <person name="Shimada K."/>
            <person name="Silva D."/>
            <person name="Sinclair B."/>
            <person name="Sperling S."/>
            <person name="Stupka E."/>
            <person name="Sugiura K."/>
            <person name="Sultana R."/>
            <person name="Takenaka Y."/>
            <person name="Taki K."/>
            <person name="Tammoja K."/>
            <person name="Tan S.L."/>
            <person name="Tang S."/>
            <person name="Taylor M.S."/>
            <person name="Tegner J."/>
            <person name="Teichmann S.A."/>
            <person name="Ueda H.R."/>
            <person name="van Nimwegen E."/>
            <person name="Verardo R."/>
            <person name="Wei C.L."/>
            <person name="Yagi K."/>
            <person name="Yamanishi H."/>
            <person name="Zabarovsky E."/>
            <person name="Zhu S."/>
            <person name="Zimmer A."/>
            <person name="Hide W."/>
            <person name="Bult C."/>
            <person name="Grimmond S.M."/>
            <person name="Teasdale R.D."/>
            <person name="Liu E.T."/>
            <person name="Brusic V."/>
            <person name="Quackenbush J."/>
            <person name="Wahlestedt C."/>
            <person name="Mattick J.S."/>
            <person name="Hume D.A."/>
            <person name="Kai C."/>
            <person name="Sasaki D."/>
            <person name="Tomaru Y."/>
            <person name="Fukuda S."/>
            <person name="Kanamori-Katayama M."/>
            <person name="Suzuki M."/>
            <person name="Aoki J."/>
            <person name="Arakawa T."/>
            <person name="Iida J."/>
            <person name="Imamura K."/>
            <person name="Itoh M."/>
            <person name="Kato T."/>
            <person name="Kawaji H."/>
            <person name="Kawagashira N."/>
            <person name="Kawashima T."/>
            <person name="Kojima M."/>
            <person name="Kondo S."/>
            <person name="Konno H."/>
            <person name="Nakano K."/>
            <person name="Ninomiya N."/>
            <person name="Nishio T."/>
            <person name="Okada M."/>
            <person name="Plessy C."/>
            <person name="Shibata K."/>
            <person name="Shiraki T."/>
            <person name="Suzuki S."/>
            <person name="Tagami M."/>
            <person name="Waki K."/>
            <person name="Watahiki A."/>
            <person name="Okamura-Oho Y."/>
            <person name="Suzuki H."/>
            <person name="Kawai J."/>
            <person name="Hayashizaki Y."/>
        </authorList>
    </citation>
    <scope>NUCLEOTIDE SEQUENCE [LARGE SCALE MRNA] (ISOFORMS 1 AND 2)</scope>
    <source>
        <strain>C57BL/6J</strain>
        <strain>NOD</strain>
        <tissue>Bone marrow</tissue>
        <tissue>Testis</tissue>
    </source>
</reference>
<reference key="2">
    <citation type="journal article" date="2004" name="Genome Res.">
        <title>The status, quality, and expansion of the NIH full-length cDNA project: the Mammalian Gene Collection (MGC).</title>
        <authorList>
            <consortium name="The MGC Project Team"/>
        </authorList>
    </citation>
    <scope>NUCLEOTIDE SEQUENCE [LARGE SCALE MRNA] (ISOFORM 1)</scope>
    <source>
        <strain>C57BL/6J</strain>
        <strain>FVB/N</strain>
        <tissue>Brain</tissue>
        <tissue>Mammary tumor</tissue>
        <tissue>Olfactory epithelium</tissue>
    </source>
</reference>
<reference key="3">
    <citation type="journal article" date="2005" name="Traffic">
        <title>A novel mammalian retromer component, Vps26B.</title>
        <authorList>
            <person name="Kerr M.C."/>
            <person name="Bennetts J.S."/>
            <person name="Simpson F."/>
            <person name="Thomas E.C."/>
            <person name="Flegg C."/>
            <person name="Gleeson P.A."/>
            <person name="Wicking C."/>
            <person name="Teasdale R.D."/>
        </authorList>
    </citation>
    <scope>SUBCELLULAR LOCATION</scope>
    <scope>TISSUE SPECIFICITY</scope>
    <scope>INTERACTION WITH VPS35</scope>
</reference>
<reference key="4">
    <citation type="journal article" date="2009" name="Immunity">
        <title>The phagosomal proteome in interferon-gamma-activated macrophages.</title>
        <authorList>
            <person name="Trost M."/>
            <person name="English L."/>
            <person name="Lemieux S."/>
            <person name="Courcelles M."/>
            <person name="Desjardins M."/>
            <person name="Thibault P."/>
        </authorList>
    </citation>
    <scope>PHOSPHORYLATION [LARGE SCALE ANALYSIS] AT SER-302 AND SER-319</scope>
    <scope>IDENTIFICATION BY MASS SPECTROMETRY [LARGE SCALE ANALYSIS]</scope>
</reference>
<reference key="5">
    <citation type="journal article" date="2010" name="Biochem. Biophys. Res. Commun.">
        <title>Implication of mouse Vps26b-Vps29-Vps35 retromer complex in sortilin trafficking.</title>
        <authorList>
            <person name="Kim E."/>
            <person name="Lee Y."/>
            <person name="Lee H.J."/>
            <person name="Kim J.S."/>
            <person name="Song B.S."/>
            <person name="Huh J.W."/>
            <person name="Lee S.R."/>
            <person name="Kim S.U."/>
            <person name="Kim S.H."/>
            <person name="Hong Y."/>
            <person name="Shim I."/>
            <person name="Chang K.T."/>
        </authorList>
    </citation>
    <scope>FUNCTION</scope>
    <scope>SUBUNIT</scope>
</reference>
<reference key="6">
    <citation type="journal article" date="2010" name="Cell">
        <title>A tissue-specific atlas of mouse protein phosphorylation and expression.</title>
        <authorList>
            <person name="Huttlin E.L."/>
            <person name="Jedrychowski M.P."/>
            <person name="Elias J.E."/>
            <person name="Goswami T."/>
            <person name="Rad R."/>
            <person name="Beausoleil S.A."/>
            <person name="Villen J."/>
            <person name="Haas W."/>
            <person name="Sowa M.E."/>
            <person name="Gygi S.P."/>
        </authorList>
    </citation>
    <scope>PHOSPHORYLATION [LARGE SCALE ANALYSIS] AT SER-304</scope>
    <scope>IDENTIFICATION BY MASS SPECTROMETRY [LARGE SCALE ANALYSIS]</scope>
    <source>
        <tissue>Brain</tissue>
        <tissue>Brown adipose tissue</tissue>
        <tissue>Kidney</tissue>
        <tissue>Liver</tissue>
        <tissue>Lung</tissue>
        <tissue>Pancreas</tissue>
        <tissue>Spleen</tissue>
        <tissue>Testis</tissue>
    </source>
</reference>
<reference key="7">
    <citation type="journal article" date="2011" name="Traffic">
        <title>Vps26A and Vps26B subunits define distinct retromer complexes.</title>
        <authorList>
            <person name="Bugarcic A."/>
            <person name="Zhe Y."/>
            <person name="Kerr M.C."/>
            <person name="Griffin J."/>
            <person name="Collins B.M."/>
            <person name="Teasdale R.D."/>
        </authorList>
    </citation>
    <scope>FUNCTION</scope>
    <scope>SUBUNIT</scope>
    <scope>INTERACTION WITH TBC1D5 AND GOLPH3</scope>
    <scope>SUBCELLULAR LOCATION</scope>
    <scope>TISSUE SPECIFICITY</scope>
</reference>
<reference key="8">
    <citation type="journal article" date="2014" name="Proc. Natl. Acad. Sci. U.S.A.">
        <title>A unique PDZ domain and arrestin-like fold interaction reveals mechanistic details of endocytic recycling by SNX27-retromer.</title>
        <authorList>
            <person name="Gallon M."/>
            <person name="Clairfeuille T."/>
            <person name="Steinberg F."/>
            <person name="Mas C."/>
            <person name="Ghai R."/>
            <person name="Sessions R.B."/>
            <person name="Teasdale R.D."/>
            <person name="Collins B.M."/>
            <person name="Cullen P.J."/>
        </authorList>
    </citation>
    <scope>FUNCTION</scope>
    <scope>INTERACTION WITH SNX27</scope>
    <scope>MUTAGENESIS OF ASP-42 AND LEU-152</scope>
</reference>
<reference key="9">
    <citation type="journal article" date="2008" name="Traffic">
        <title>Structure of Vps26B and mapping of its interaction with the retromer protein complex.</title>
        <authorList>
            <person name="Collins B.M."/>
            <person name="Norwood S.J."/>
            <person name="Kerr M.C."/>
            <person name="Mahony D."/>
            <person name="Seaman M.N."/>
            <person name="Teasdale R.D."/>
            <person name="Owen D.J."/>
        </authorList>
    </citation>
    <scope>X-RAY CRYSTALLOGRAPHY (2.1 ANGSTROMS) OF 7-336</scope>
    <scope>SUBUNIT</scope>
    <scope>MUTAGENESIS OF LEU-197; ARG-199; 233-ILE-MET-234; 240-ARG--GLU-242; PRO-245 AND ARG-247</scope>
    <scope>SUBCELLULAR LOCATION</scope>
</reference>
<reference key="10">
    <citation type="journal article" date="2011" name="Traffic">
        <title>Assembly and solution structure of the core retromer protein complex.</title>
        <authorList>
            <person name="Norwood S.J."/>
            <person name="Shaw D.J."/>
            <person name="Cowieson N.P."/>
            <person name="Owen D.J."/>
            <person name="Teasdale R.D."/>
            <person name="Collins B.M."/>
        </authorList>
    </citation>
    <scope>X-RAY CRYSTALLOGRAPHY (2.4 ANGSTROMS) OF 7-336</scope>
    <scope>SUBUNIT</scope>
</reference>
<comment type="function">
    <text evidence="1 5 6 7">Acts as a component of the retromer cargo-selective complex (CSC) (PubMed:21040701, PubMed:21920005). The CSC is believed to be the core functional component of retromer or respective retromer complex variants acting to prevent missorting of selected transmembrane cargo proteins into the lysosomal degradation pathway. The recruitment of the CSC to the endosomal membrane involves RAB7A and SNX3. The SNX-BAR retromer mediates retrograde transport of cargo proteins from endosomes to the trans-Golgi network (TGN) and is involved in endosome-to-plasma membrane transport for cargo protein recycling. The SNX3-retromer mediates the retrograde transport of WLS distinct from the SNX-BAR retromer pathway. The SNX27-retromer is believed to be involved in endosome-to-plasma membrane trafficking and recycling of a broad spectrum of cargo proteins. The CSC seems to act as recruitment hub for other proteins, such as the WASH complex and TBC1D5 (By similarity). May be involved in retrograde transport of SORT1 but not of IGF2R (PubMed:21040701). Acts redundantly with VSP26A in SNX-27 mediated endocytic recycling of SLC2A1/GLUT1 (PubMed:25136126).</text>
</comment>
<comment type="subunit">
    <text evidence="1 2 3 4 5 6 7 9">Component of the heterotrimeric retromer cargo-selective complex (CSC), also described as vacuolar protein sorting subcomplex (VPS), formed by VPS26 (VPS26A or VPS26B), VPS29 and VPS35 (PubMed:18088321, PubMed:20875039, PubMed:21040701, PubMed:21920005). The CSC has a highly elongated structure with VPS26 and VPS29 binding independently at opposite distal ends of VPS35 as central platform (Probable). The CSC is believed to associate with variable sorting nexins to form functionally distinct retromer complex variants. The originally described SNX-BAR retromer is a pentamer containing the CSC and a heterodimeric membrane-deforming subcomplex formed between SNX1 or SNX2 and SNX5 or SNX6 (also called SNX-BAR subcomplex); the respective CSC and SNX-BAR subcomplexes associate with low affinity. The CSC associates with SNX3 to form a SNX3-retromer complex. The CSC associates with SNX27, the WASH complex and the SNX-BAR subcomplex to form the SNX27-retromer complex (By similarity). Interacts with VPS29, VPS35, TBC1D5, GOLPH3, SNX27 (PubMed:16190980, PubMed:21040701, PubMed:21920005, PubMed:25136126).</text>
</comment>
<comment type="subcellular location">
    <subcellularLocation>
        <location evidence="2">Cytoplasm</location>
    </subcellularLocation>
    <subcellularLocation>
        <location evidence="2">Membrane</location>
        <topology evidence="2">Peripheral membrane protein</topology>
    </subcellularLocation>
    <subcellularLocation>
        <location evidence="6">Early endosome</location>
    </subcellularLocation>
    <subcellularLocation>
        <location evidence="6">Late endosome</location>
    </subcellularLocation>
    <text evidence="2 3 6">Endosomal localization is reported controversially. Does not localize to endosomes (PubMed:16190980). Localizes to early and late endosomal structures (PubMed:18088321, PubMed:21920005).</text>
</comment>
<comment type="alternative products">
    <event type="alternative splicing"/>
    <isoform>
        <id>Q8C0E2-1</id>
        <name>1</name>
        <sequence type="displayed"/>
    </isoform>
    <isoform>
        <id>Q8C0E2-2</id>
        <name>2</name>
        <sequence type="described" ref="VSP_019927"/>
    </isoform>
</comment>
<comment type="tissue specificity">
    <text evidence="2 6">Ubiquitously expressed in developing embryo and adult. Highly expressed in brain.</text>
</comment>
<comment type="similarity">
    <text evidence="10">Belongs to the VPS26 family.</text>
</comment>
<organism>
    <name type="scientific">Mus musculus</name>
    <name type="common">Mouse</name>
    <dbReference type="NCBI Taxonomy" id="10090"/>
    <lineage>
        <taxon>Eukaryota</taxon>
        <taxon>Metazoa</taxon>
        <taxon>Chordata</taxon>
        <taxon>Craniata</taxon>
        <taxon>Vertebrata</taxon>
        <taxon>Euteleostomi</taxon>
        <taxon>Mammalia</taxon>
        <taxon>Eutheria</taxon>
        <taxon>Euarchontoglires</taxon>
        <taxon>Glires</taxon>
        <taxon>Rodentia</taxon>
        <taxon>Myomorpha</taxon>
        <taxon>Muroidea</taxon>
        <taxon>Muridae</taxon>
        <taxon>Murinae</taxon>
        <taxon>Mus</taxon>
        <taxon>Mus</taxon>
    </lineage>
</organism>
<evidence type="ECO:0000250" key="1">
    <source>
        <dbReference type="UniProtKB" id="O75436"/>
    </source>
</evidence>
<evidence type="ECO:0000269" key="2">
    <source>
    </source>
</evidence>
<evidence type="ECO:0000269" key="3">
    <source>
    </source>
</evidence>
<evidence type="ECO:0000269" key="4">
    <source>
    </source>
</evidence>
<evidence type="ECO:0000269" key="5">
    <source>
    </source>
</evidence>
<evidence type="ECO:0000269" key="6">
    <source>
    </source>
</evidence>
<evidence type="ECO:0000269" key="7">
    <source>
    </source>
</evidence>
<evidence type="ECO:0000303" key="8">
    <source>
    </source>
</evidence>
<evidence type="ECO:0000303" key="9">
    <source>
    </source>
</evidence>
<evidence type="ECO:0000305" key="10"/>
<evidence type="ECO:0007744" key="11">
    <source>
    </source>
</evidence>
<evidence type="ECO:0007744" key="12">
    <source>
    </source>
</evidence>
<evidence type="ECO:0007829" key="13">
    <source>
        <dbReference type="PDB" id="2R51"/>
    </source>
</evidence>
<evidence type="ECO:0007829" key="14">
    <source>
        <dbReference type="PDB" id="3LH8"/>
    </source>
</evidence>
<proteinExistence type="evidence at protein level"/>
<sequence>MSFFGFGQSVEVEILLNDAESRKRAEHKTEDGKKEKYFLFYDGETVSGKVSLSLKNPNKRLEHQGIKIEFIGQIELYYDRGNHHEFVSLVKDLARPGEITQSQAFDFEFTHVEKPYESYTGQNVKLRYFLRATISRRLNDVVKEMDIVVHTLSTYPELNSSIKMEVGIEDCLHIEFEYNKSKYHLKDVIVGKIYFLLVRIKIKHMEIDIIKRETTGTGPNVYHENDTIAKYEIMDGAPVRGESIPIRLFLAGYELTPTMRDINKKFSVRYYLNLVLIDEEERRYFKQQEVVLWRKGDIVRKSMSHQAAIASQRFEGTTSLGEVRTPGQLSDNNSRQ</sequence>
<gene>
    <name type="primary">Vps26b</name>
</gene>
<dbReference type="EMBL" id="AK031589">
    <property type="protein sequence ID" value="BAC27465.1"/>
    <property type="molecule type" value="mRNA"/>
</dbReference>
<dbReference type="EMBL" id="AK150929">
    <property type="protein sequence ID" value="BAE29967.1"/>
    <property type="molecule type" value="mRNA"/>
</dbReference>
<dbReference type="EMBL" id="AK155578">
    <property type="protein sequence ID" value="BAE33333.1"/>
    <property type="molecule type" value="mRNA"/>
</dbReference>
<dbReference type="EMBL" id="AK165539">
    <property type="protein sequence ID" value="BAE38244.1"/>
    <property type="molecule type" value="mRNA"/>
</dbReference>
<dbReference type="EMBL" id="AK171154">
    <property type="protein sequence ID" value="BAE42279.1"/>
    <property type="molecule type" value="mRNA"/>
</dbReference>
<dbReference type="EMBL" id="BC029758">
    <property type="protein sequence ID" value="AAH29758.1"/>
    <property type="molecule type" value="mRNA"/>
</dbReference>
<dbReference type="EMBL" id="BC049180">
    <property type="protein sequence ID" value="AAH49180.1"/>
    <property type="molecule type" value="mRNA"/>
</dbReference>
<dbReference type="EMBL" id="BC052721">
    <property type="protein sequence ID" value="AAH52721.1"/>
    <property type="molecule type" value="mRNA"/>
</dbReference>
<dbReference type="EMBL" id="BC062972">
    <property type="protein sequence ID" value="AAH62972.1"/>
    <property type="molecule type" value="mRNA"/>
</dbReference>
<dbReference type="CCDS" id="CCDS22938.1">
    <molecule id="Q8C0E2-1"/>
</dbReference>
<dbReference type="RefSeq" id="NP_821170.1">
    <molecule id="Q8C0E2-1"/>
    <property type="nucleotide sequence ID" value="NM_178027.4"/>
</dbReference>
<dbReference type="PDB" id="2R51">
    <property type="method" value="X-ray"/>
    <property type="resolution" value="2.10 A"/>
    <property type="chains" value="A=7-336"/>
</dbReference>
<dbReference type="PDB" id="3LH8">
    <property type="method" value="X-ray"/>
    <property type="resolution" value="2.60 A"/>
    <property type="chains" value="A/B=7-336"/>
</dbReference>
<dbReference type="PDB" id="3LH9">
    <property type="method" value="X-ray"/>
    <property type="resolution" value="2.40 A"/>
    <property type="chains" value="A/B=7-336"/>
</dbReference>
<dbReference type="PDB" id="3LHA">
    <property type="method" value="X-ray"/>
    <property type="resolution" value="2.80 A"/>
    <property type="chains" value="A/B=7-336"/>
</dbReference>
<dbReference type="PDBsum" id="2R51"/>
<dbReference type="PDBsum" id="3LH8"/>
<dbReference type="PDBsum" id="3LH9"/>
<dbReference type="PDBsum" id="3LHA"/>
<dbReference type="SMR" id="Q8C0E2"/>
<dbReference type="BioGRID" id="213223">
    <property type="interactions" value="10"/>
</dbReference>
<dbReference type="FunCoup" id="Q8C0E2">
    <property type="interactions" value="4074"/>
</dbReference>
<dbReference type="IntAct" id="Q8C0E2">
    <property type="interactions" value="6"/>
</dbReference>
<dbReference type="MINT" id="Q8C0E2"/>
<dbReference type="STRING" id="10090.ENSMUSP00000034470"/>
<dbReference type="GlyGen" id="Q8C0E2">
    <property type="glycosylation" value="2 sites, 2 N-linked glycans (2 sites)"/>
</dbReference>
<dbReference type="iPTMnet" id="Q8C0E2"/>
<dbReference type="PhosphoSitePlus" id="Q8C0E2"/>
<dbReference type="SwissPalm" id="Q8C0E2"/>
<dbReference type="jPOST" id="Q8C0E2"/>
<dbReference type="PaxDb" id="10090-ENSMUSP00000034470"/>
<dbReference type="PeptideAtlas" id="Q8C0E2"/>
<dbReference type="ProteomicsDB" id="297577">
    <molecule id="Q8C0E2-1"/>
</dbReference>
<dbReference type="ProteomicsDB" id="297578">
    <molecule id="Q8C0E2-2"/>
</dbReference>
<dbReference type="Pumba" id="Q8C0E2"/>
<dbReference type="Antibodypedia" id="33166">
    <property type="antibodies" value="119 antibodies from 26 providers"/>
</dbReference>
<dbReference type="DNASU" id="69091"/>
<dbReference type="Ensembl" id="ENSMUST00000034470.11">
    <molecule id="Q8C0E2-1"/>
    <property type="protein sequence ID" value="ENSMUSP00000034470.10"/>
    <property type="gene ID" value="ENSMUSG00000031988.11"/>
</dbReference>
<dbReference type="GeneID" id="69091"/>
<dbReference type="KEGG" id="mmu:69091"/>
<dbReference type="UCSC" id="uc009oqd.2">
    <molecule id="Q8C0E2-1"/>
    <property type="organism name" value="mouse"/>
</dbReference>
<dbReference type="UCSC" id="uc009oqf.2">
    <molecule id="Q8C0E2-2"/>
    <property type="organism name" value="mouse"/>
</dbReference>
<dbReference type="AGR" id="MGI:1917656"/>
<dbReference type="CTD" id="112936"/>
<dbReference type="MGI" id="MGI:1917656">
    <property type="gene designation" value="Vps26b"/>
</dbReference>
<dbReference type="VEuPathDB" id="HostDB:ENSMUSG00000031988"/>
<dbReference type="eggNOG" id="KOG3063">
    <property type="taxonomic scope" value="Eukaryota"/>
</dbReference>
<dbReference type="GeneTree" id="ENSGT00950000183064"/>
<dbReference type="HOGENOM" id="CLU_031077_0_0_1"/>
<dbReference type="InParanoid" id="Q8C0E2"/>
<dbReference type="OMA" id="FKWKFSS"/>
<dbReference type="OrthoDB" id="3821113at2759"/>
<dbReference type="PhylomeDB" id="Q8C0E2"/>
<dbReference type="TreeFam" id="TF300907"/>
<dbReference type="BioGRID-ORCS" id="69091">
    <property type="hits" value="4 hits in 78 CRISPR screens"/>
</dbReference>
<dbReference type="ChiTaRS" id="Vps26b">
    <property type="organism name" value="mouse"/>
</dbReference>
<dbReference type="EvolutionaryTrace" id="Q8C0E2"/>
<dbReference type="PRO" id="PR:Q8C0E2"/>
<dbReference type="Proteomes" id="UP000000589">
    <property type="component" value="Chromosome 9"/>
</dbReference>
<dbReference type="RNAct" id="Q8C0E2">
    <property type="molecule type" value="protein"/>
</dbReference>
<dbReference type="Bgee" id="ENSMUSG00000031988">
    <property type="expression patterns" value="Expressed in ascending aorta and 263 other cell types or tissues"/>
</dbReference>
<dbReference type="GO" id="GO:0005829">
    <property type="term" value="C:cytosol"/>
    <property type="evidence" value="ECO:0007669"/>
    <property type="project" value="GOC"/>
</dbReference>
<dbReference type="GO" id="GO:0005769">
    <property type="term" value="C:early endosome"/>
    <property type="evidence" value="ECO:0000314"/>
    <property type="project" value="UniProtKB"/>
</dbReference>
<dbReference type="GO" id="GO:0098978">
    <property type="term" value="C:glutamatergic synapse"/>
    <property type="evidence" value="ECO:0000314"/>
    <property type="project" value="SynGO"/>
</dbReference>
<dbReference type="GO" id="GO:0005770">
    <property type="term" value="C:late endosome"/>
    <property type="evidence" value="ECO:0000314"/>
    <property type="project" value="UniProtKB"/>
</dbReference>
<dbReference type="GO" id="GO:0045335">
    <property type="term" value="C:phagocytic vesicle"/>
    <property type="evidence" value="ECO:0000314"/>
    <property type="project" value="MGI"/>
</dbReference>
<dbReference type="GO" id="GO:0098842">
    <property type="term" value="C:postsynaptic early endosome"/>
    <property type="evidence" value="ECO:0000314"/>
    <property type="project" value="SynGO"/>
</dbReference>
<dbReference type="GO" id="GO:0098837">
    <property type="term" value="C:postsynaptic recycling endosome"/>
    <property type="evidence" value="ECO:0000314"/>
    <property type="project" value="SynGO"/>
</dbReference>
<dbReference type="GO" id="GO:0030904">
    <property type="term" value="C:retromer complex"/>
    <property type="evidence" value="ECO:0000314"/>
    <property type="project" value="UniProtKB"/>
</dbReference>
<dbReference type="GO" id="GO:0071346">
    <property type="term" value="P:cellular response to type II interferon"/>
    <property type="evidence" value="ECO:0000314"/>
    <property type="project" value="MGI"/>
</dbReference>
<dbReference type="GO" id="GO:0006886">
    <property type="term" value="P:intracellular protein transport"/>
    <property type="evidence" value="ECO:0007669"/>
    <property type="project" value="InterPro"/>
</dbReference>
<dbReference type="GO" id="GO:0098696">
    <property type="term" value="P:regulation of neurotransmitter receptor localization to postsynaptic specialization membrane"/>
    <property type="evidence" value="ECO:0000314"/>
    <property type="project" value="SynGO"/>
</dbReference>
<dbReference type="GO" id="GO:0042147">
    <property type="term" value="P:retrograde transport, endosome to Golgi"/>
    <property type="evidence" value="ECO:0000315"/>
    <property type="project" value="UniProtKB"/>
</dbReference>
<dbReference type="FunFam" id="2.60.40.640:FF:000001">
    <property type="entry name" value="Vacuolar protein sorting-associated protein 26A"/>
    <property type="match status" value="1"/>
</dbReference>
<dbReference type="FunFam" id="2.60.40.640:FF:000002">
    <property type="entry name" value="Vacuolar protein sorting-associated protein 26A"/>
    <property type="match status" value="1"/>
</dbReference>
<dbReference type="Gene3D" id="2.60.40.640">
    <property type="match status" value="2"/>
</dbReference>
<dbReference type="InterPro" id="IPR014752">
    <property type="entry name" value="Arrestin-like_C"/>
</dbReference>
<dbReference type="InterPro" id="IPR028934">
    <property type="entry name" value="Vps26-related"/>
</dbReference>
<dbReference type="PANTHER" id="PTHR12233">
    <property type="entry name" value="VACUOLAR PROTEIN SORTING 26 RELATED"/>
    <property type="match status" value="1"/>
</dbReference>
<dbReference type="Pfam" id="PF03643">
    <property type="entry name" value="Vps26"/>
    <property type="match status" value="1"/>
</dbReference>
<protein>
    <recommendedName>
        <fullName>Vacuolar protein sorting-associated protein 26B</fullName>
    </recommendedName>
    <alternativeName>
        <fullName>Vesicle protein sorting 26B</fullName>
    </alternativeName>
</protein>
<name>VP26B_MOUSE</name>
<feature type="chain" id="PRO_0000247090" description="Vacuolar protein sorting-associated protein 26B">
    <location>
        <begin position="1"/>
        <end position="336"/>
    </location>
</feature>
<feature type="modified residue" description="Phosphoserine" evidence="11">
    <location>
        <position position="302"/>
    </location>
</feature>
<feature type="modified residue" description="Phosphoserine" evidence="12">
    <location>
        <position position="304"/>
    </location>
</feature>
<feature type="modified residue" description="Phosphoserine" evidence="11">
    <location>
        <position position="319"/>
    </location>
</feature>
<feature type="splice variant" id="VSP_019927" description="In isoform 2." evidence="8">
    <original>SIPIRLFLAGYELTPTMRDINKKFSVRYYLNLVLIDEEERRYFKQQEVVLWRKGDIVRKSMSHQAAIASQRFEGTTSLGEVRTPGQLSDNNSRQ</original>
    <variation>PPGLGPLSLCSQTTCSVSALGKGSNFEVKSLFYFIYLFIF</variation>
    <location>
        <begin position="243"/>
        <end position="336"/>
    </location>
</feature>
<feature type="mutagenesis site" description="Disrupts interaction with SNX27." evidence="7">
    <original>D</original>
    <variation>A</variation>
    <location>
        <position position="42"/>
    </location>
</feature>
<feature type="mutagenesis site" description="Disrupts interaction with SNX27." evidence="7">
    <original>L</original>
    <variation>A</variation>
    <location>
        <position position="152"/>
    </location>
</feature>
<feature type="mutagenesis site" description="No endosomal localization; no effect on interaction with VPS35:VPS29 dimer; when associated with E-199." evidence="3">
    <original>L</original>
    <variation>S</variation>
    <location>
        <position position="197"/>
    </location>
</feature>
<feature type="mutagenesis site" description="No endosomal localization; no effect on interaction with VPS35:VPS29 dimer; when associated with S-197." evidence="3">
    <original>R</original>
    <variation>E</variation>
    <location>
        <position position="199"/>
    </location>
</feature>
<feature type="mutagenesis site" description="Disrupts interaction with VPS35:VPS29 dimer; no endosomal localization." evidence="3">
    <original>IM</original>
    <variation>DN</variation>
    <location>
        <begin position="233"/>
        <end position="234"/>
    </location>
</feature>
<feature type="mutagenesis site" description="No endosomal localization; no effect on interaction with VPS35:VPS29 dimer." evidence="3">
    <original>RGE</original>
    <variation>SAS</variation>
    <location>
        <begin position="240"/>
        <end position="242"/>
    </location>
</feature>
<feature type="mutagenesis site" description="Disrupts interaction with VPS35:VPS29 dimer; no endosomal localization; when associated with S-247." evidence="3">
    <original>P</original>
    <variation>S</variation>
    <location>
        <position position="245"/>
    </location>
</feature>
<feature type="mutagenesis site" description="Disrupts interaction with VPS35:VPS29 dimer; no endosomal localization; when associated with S-245." evidence="3">
    <original>R</original>
    <variation>S</variation>
    <location>
        <position position="247"/>
    </location>
</feature>
<feature type="strand" evidence="13">
    <location>
        <begin position="10"/>
        <end position="16"/>
    </location>
</feature>
<feature type="turn" evidence="13">
    <location>
        <begin position="17"/>
        <end position="21"/>
    </location>
</feature>
<feature type="strand" evidence="13">
    <location>
        <begin position="24"/>
        <end position="28"/>
    </location>
</feature>
<feature type="strand" evidence="14">
    <location>
        <begin position="30"/>
        <end position="32"/>
    </location>
</feature>
<feature type="strand" evidence="13">
    <location>
        <begin position="34"/>
        <end position="41"/>
    </location>
</feature>
<feature type="strand" evidence="13">
    <location>
        <begin position="46"/>
        <end position="56"/>
    </location>
</feature>
<feature type="strand" evidence="13">
    <location>
        <begin position="61"/>
        <end position="64"/>
    </location>
</feature>
<feature type="strand" evidence="13">
    <location>
        <begin position="66"/>
        <end position="76"/>
    </location>
</feature>
<feature type="helix" evidence="13">
    <location>
        <begin position="77"/>
        <end position="79"/>
    </location>
</feature>
<feature type="strand" evidence="13">
    <location>
        <begin position="84"/>
        <end position="94"/>
    </location>
</feature>
<feature type="strand" evidence="13">
    <location>
        <begin position="96"/>
        <end position="99"/>
    </location>
</feature>
<feature type="strand" evidence="13">
    <location>
        <begin position="103"/>
        <end position="109"/>
    </location>
</feature>
<feature type="strand" evidence="13">
    <location>
        <begin position="122"/>
        <end position="134"/>
    </location>
</feature>
<feature type="strand" evidence="13">
    <location>
        <begin position="141"/>
        <end position="150"/>
    </location>
</feature>
<feature type="strand" evidence="13">
    <location>
        <begin position="162"/>
        <end position="168"/>
    </location>
</feature>
<feature type="turn" evidence="13">
    <location>
        <begin position="169"/>
        <end position="171"/>
    </location>
</feature>
<feature type="strand" evidence="13">
    <location>
        <begin position="172"/>
        <end position="179"/>
    </location>
</feature>
<feature type="strand" evidence="13">
    <location>
        <begin position="181"/>
        <end position="184"/>
    </location>
</feature>
<feature type="strand" evidence="13">
    <location>
        <begin position="188"/>
        <end position="198"/>
    </location>
</feature>
<feature type="strand" evidence="13">
    <location>
        <begin position="202"/>
        <end position="217"/>
    </location>
</feature>
<feature type="strand" evidence="13">
    <location>
        <begin position="220"/>
        <end position="236"/>
    </location>
</feature>
<feature type="strand" evidence="13">
    <location>
        <begin position="243"/>
        <end position="249"/>
    </location>
</feature>
<feature type="helix" evidence="13">
    <location>
        <begin position="250"/>
        <end position="252"/>
    </location>
</feature>
<feature type="strand" evidence="13">
    <location>
        <begin position="259"/>
        <end position="262"/>
    </location>
</feature>
<feature type="turn" evidence="13">
    <location>
        <begin position="263"/>
        <end position="265"/>
    </location>
</feature>
<feature type="strand" evidence="13">
    <location>
        <begin position="266"/>
        <end position="278"/>
    </location>
</feature>
<feature type="strand" evidence="13">
    <location>
        <begin position="283"/>
        <end position="293"/>
    </location>
</feature>